<accession>Q94EG9</accession>
<accession>Q9LG21</accession>
<comment type="function">
    <text evidence="1">Probably mediates zinc uptake from the rhizosphere.</text>
</comment>
<comment type="subcellular location">
    <subcellularLocation>
        <location evidence="3">Cell membrane</location>
        <topology evidence="3">Multi-pass membrane protein</topology>
    </subcellularLocation>
</comment>
<comment type="similarity">
    <text evidence="3">Belongs to the ZIP transporter (TC 2.A.5) family.</text>
</comment>
<comment type="sequence caution" evidence="3">
    <conflict type="erroneous gene model prediction">
        <sequence resource="EMBL-CDS" id="AAF79317"/>
    </conflict>
</comment>
<protein>
    <recommendedName>
        <fullName>Zinc transporter 11</fullName>
    </recommendedName>
    <alternativeName>
        <fullName>ZRT/IRT-like protein 11</fullName>
    </alternativeName>
</protein>
<keyword id="KW-1003">Cell membrane</keyword>
<keyword id="KW-0406">Ion transport</keyword>
<keyword id="KW-0472">Membrane</keyword>
<keyword id="KW-1185">Reference proteome</keyword>
<keyword id="KW-0732">Signal</keyword>
<keyword id="KW-0812">Transmembrane</keyword>
<keyword id="KW-1133">Transmembrane helix</keyword>
<keyword id="KW-0813">Transport</keyword>
<keyword id="KW-0862">Zinc</keyword>
<keyword id="KW-0864">Zinc transport</keyword>
<gene>
    <name type="primary">ZIP11</name>
    <name type="ordered locus">At1g55910</name>
    <name type="ORF">F14J16.16</name>
</gene>
<organism>
    <name type="scientific">Arabidopsis thaliana</name>
    <name type="common">Mouse-ear cress</name>
    <dbReference type="NCBI Taxonomy" id="3702"/>
    <lineage>
        <taxon>Eukaryota</taxon>
        <taxon>Viridiplantae</taxon>
        <taxon>Streptophyta</taxon>
        <taxon>Embryophyta</taxon>
        <taxon>Tracheophyta</taxon>
        <taxon>Spermatophyta</taxon>
        <taxon>Magnoliopsida</taxon>
        <taxon>eudicotyledons</taxon>
        <taxon>Gunneridae</taxon>
        <taxon>Pentapetalae</taxon>
        <taxon>rosids</taxon>
        <taxon>malvids</taxon>
        <taxon>Brassicales</taxon>
        <taxon>Brassicaceae</taxon>
        <taxon>Camelineae</taxon>
        <taxon>Arabidopsis</taxon>
    </lineage>
</organism>
<reference key="1">
    <citation type="journal article" date="2001" name="Plant Physiol.">
        <title>Phylogenetic relationships within cation transporter families of Arabidopsis.</title>
        <authorList>
            <person name="Maeser P."/>
            <person name="Thomine S."/>
            <person name="Schroeder J.I."/>
            <person name="Ward J.M."/>
            <person name="Hirschi K."/>
            <person name="Sze H."/>
            <person name="Talke I.N."/>
            <person name="Amtmann A."/>
            <person name="Maathuis F.J.M."/>
            <person name="Sanders D."/>
            <person name="Harper J.F."/>
            <person name="Tchieu J."/>
            <person name="Gribskov M."/>
            <person name="Persans M.W."/>
            <person name="Salt D.E."/>
            <person name="Kim S.A."/>
            <person name="Guerinot M.L."/>
        </authorList>
    </citation>
    <scope>NUCLEOTIDE SEQUENCE [MRNA]</scope>
</reference>
<reference key="2">
    <citation type="journal article" date="2000" name="Nature">
        <title>Sequence and analysis of chromosome 1 of the plant Arabidopsis thaliana.</title>
        <authorList>
            <person name="Theologis A."/>
            <person name="Ecker J.R."/>
            <person name="Palm C.J."/>
            <person name="Federspiel N.A."/>
            <person name="Kaul S."/>
            <person name="White O."/>
            <person name="Alonso J."/>
            <person name="Altafi H."/>
            <person name="Araujo R."/>
            <person name="Bowman C.L."/>
            <person name="Brooks S.Y."/>
            <person name="Buehler E."/>
            <person name="Chan A."/>
            <person name="Chao Q."/>
            <person name="Chen H."/>
            <person name="Cheuk R.F."/>
            <person name="Chin C.W."/>
            <person name="Chung M.K."/>
            <person name="Conn L."/>
            <person name="Conway A.B."/>
            <person name="Conway A.R."/>
            <person name="Creasy T.H."/>
            <person name="Dewar K."/>
            <person name="Dunn P."/>
            <person name="Etgu P."/>
            <person name="Feldblyum T.V."/>
            <person name="Feng J.-D."/>
            <person name="Fong B."/>
            <person name="Fujii C.Y."/>
            <person name="Gill J.E."/>
            <person name="Goldsmith A.D."/>
            <person name="Haas B."/>
            <person name="Hansen N.F."/>
            <person name="Hughes B."/>
            <person name="Huizar L."/>
            <person name="Hunter J.L."/>
            <person name="Jenkins J."/>
            <person name="Johnson-Hopson C."/>
            <person name="Khan S."/>
            <person name="Khaykin E."/>
            <person name="Kim C.J."/>
            <person name="Koo H.L."/>
            <person name="Kremenetskaia I."/>
            <person name="Kurtz D.B."/>
            <person name="Kwan A."/>
            <person name="Lam B."/>
            <person name="Langin-Hooper S."/>
            <person name="Lee A."/>
            <person name="Lee J.M."/>
            <person name="Lenz C.A."/>
            <person name="Li J.H."/>
            <person name="Li Y.-P."/>
            <person name="Lin X."/>
            <person name="Liu S.X."/>
            <person name="Liu Z.A."/>
            <person name="Luros J.S."/>
            <person name="Maiti R."/>
            <person name="Marziali A."/>
            <person name="Militscher J."/>
            <person name="Miranda M."/>
            <person name="Nguyen M."/>
            <person name="Nierman W.C."/>
            <person name="Osborne B.I."/>
            <person name="Pai G."/>
            <person name="Peterson J."/>
            <person name="Pham P.K."/>
            <person name="Rizzo M."/>
            <person name="Rooney T."/>
            <person name="Rowley D."/>
            <person name="Sakano H."/>
            <person name="Salzberg S.L."/>
            <person name="Schwartz J.R."/>
            <person name="Shinn P."/>
            <person name="Southwick A.M."/>
            <person name="Sun H."/>
            <person name="Tallon L.J."/>
            <person name="Tambunga G."/>
            <person name="Toriumi M.J."/>
            <person name="Town C.D."/>
            <person name="Utterback T."/>
            <person name="Van Aken S."/>
            <person name="Vaysberg M."/>
            <person name="Vysotskaia V.S."/>
            <person name="Walker M."/>
            <person name="Wu D."/>
            <person name="Yu G."/>
            <person name="Fraser C.M."/>
            <person name="Venter J.C."/>
            <person name="Davis R.W."/>
        </authorList>
    </citation>
    <scope>NUCLEOTIDE SEQUENCE [LARGE SCALE GENOMIC DNA]</scope>
    <source>
        <strain>cv. Columbia</strain>
    </source>
</reference>
<reference key="3">
    <citation type="journal article" date="2017" name="Plant J.">
        <title>Araport11: a complete reannotation of the Arabidopsis thaliana reference genome.</title>
        <authorList>
            <person name="Cheng C.Y."/>
            <person name="Krishnakumar V."/>
            <person name="Chan A.P."/>
            <person name="Thibaud-Nissen F."/>
            <person name="Schobel S."/>
            <person name="Town C.D."/>
        </authorList>
    </citation>
    <scope>GENOME REANNOTATION</scope>
    <source>
        <strain>cv. Columbia</strain>
    </source>
</reference>
<reference key="4">
    <citation type="journal article" date="2003" name="Science">
        <title>Empirical analysis of transcriptional activity in the Arabidopsis genome.</title>
        <authorList>
            <person name="Yamada K."/>
            <person name="Lim J."/>
            <person name="Dale J.M."/>
            <person name="Chen H."/>
            <person name="Shinn P."/>
            <person name="Palm C.J."/>
            <person name="Southwick A.M."/>
            <person name="Wu H.C."/>
            <person name="Kim C.J."/>
            <person name="Nguyen M."/>
            <person name="Pham P.K."/>
            <person name="Cheuk R.F."/>
            <person name="Karlin-Newmann G."/>
            <person name="Liu S.X."/>
            <person name="Lam B."/>
            <person name="Sakano H."/>
            <person name="Wu T."/>
            <person name="Yu G."/>
            <person name="Miranda M."/>
            <person name="Quach H.L."/>
            <person name="Tripp M."/>
            <person name="Chang C.H."/>
            <person name="Lee J.M."/>
            <person name="Toriumi M.J."/>
            <person name="Chan M.M."/>
            <person name="Tang C.C."/>
            <person name="Onodera C.S."/>
            <person name="Deng J.M."/>
            <person name="Akiyama K."/>
            <person name="Ansari Y."/>
            <person name="Arakawa T."/>
            <person name="Banh J."/>
            <person name="Banno F."/>
            <person name="Bowser L."/>
            <person name="Brooks S.Y."/>
            <person name="Carninci P."/>
            <person name="Chao Q."/>
            <person name="Choy N."/>
            <person name="Enju A."/>
            <person name="Goldsmith A.D."/>
            <person name="Gurjal M."/>
            <person name="Hansen N.F."/>
            <person name="Hayashizaki Y."/>
            <person name="Johnson-Hopson C."/>
            <person name="Hsuan V.W."/>
            <person name="Iida K."/>
            <person name="Karnes M."/>
            <person name="Khan S."/>
            <person name="Koesema E."/>
            <person name="Ishida J."/>
            <person name="Jiang P.X."/>
            <person name="Jones T."/>
            <person name="Kawai J."/>
            <person name="Kamiya A."/>
            <person name="Meyers C."/>
            <person name="Nakajima M."/>
            <person name="Narusaka M."/>
            <person name="Seki M."/>
            <person name="Sakurai T."/>
            <person name="Satou M."/>
            <person name="Tamse R."/>
            <person name="Vaysberg M."/>
            <person name="Wallender E.K."/>
            <person name="Wong C."/>
            <person name="Yamamura Y."/>
            <person name="Yuan S."/>
            <person name="Shinozaki K."/>
            <person name="Davis R.W."/>
            <person name="Theologis A."/>
            <person name="Ecker J.R."/>
        </authorList>
    </citation>
    <scope>NUCLEOTIDE SEQUENCE [LARGE SCALE MRNA]</scope>
    <source>
        <strain>cv. Columbia</strain>
    </source>
</reference>
<name>ZIP11_ARATH</name>
<dbReference type="EMBL" id="AF367763">
    <property type="protein sequence ID" value="AAL67952.1"/>
    <property type="molecule type" value="mRNA"/>
</dbReference>
<dbReference type="EMBL" id="AF367764">
    <property type="protein sequence ID" value="AAL67953.1"/>
    <property type="molecule type" value="Genomic_DNA"/>
</dbReference>
<dbReference type="EMBL" id="AC002304">
    <property type="protein sequence ID" value="AAF79317.1"/>
    <property type="status" value="ALT_SEQ"/>
    <property type="molecule type" value="Genomic_DNA"/>
</dbReference>
<dbReference type="EMBL" id="CP002684">
    <property type="protein sequence ID" value="AEE33318.1"/>
    <property type="molecule type" value="Genomic_DNA"/>
</dbReference>
<dbReference type="EMBL" id="AF410328">
    <property type="protein sequence ID" value="AAK95314.1"/>
    <property type="molecule type" value="mRNA"/>
</dbReference>
<dbReference type="EMBL" id="AY093733">
    <property type="protein sequence ID" value="AAM10357.1"/>
    <property type="molecule type" value="mRNA"/>
</dbReference>
<dbReference type="PIR" id="C96600">
    <property type="entry name" value="C96600"/>
</dbReference>
<dbReference type="RefSeq" id="NP_564703.1">
    <property type="nucleotide sequence ID" value="NM_104468.3"/>
</dbReference>
<dbReference type="SMR" id="Q94EG9"/>
<dbReference type="BioGRID" id="27266">
    <property type="interactions" value="2"/>
</dbReference>
<dbReference type="FunCoup" id="Q94EG9">
    <property type="interactions" value="151"/>
</dbReference>
<dbReference type="IntAct" id="Q94EG9">
    <property type="interactions" value="2"/>
</dbReference>
<dbReference type="STRING" id="3702.Q94EG9"/>
<dbReference type="PaxDb" id="3702-AT1G55910.1"/>
<dbReference type="ProteomicsDB" id="242949"/>
<dbReference type="EnsemblPlants" id="AT1G55910.1">
    <property type="protein sequence ID" value="AT1G55910.1"/>
    <property type="gene ID" value="AT1G55910"/>
</dbReference>
<dbReference type="GeneID" id="842041"/>
<dbReference type="Gramene" id="AT1G55910.1">
    <property type="protein sequence ID" value="AT1G55910.1"/>
    <property type="gene ID" value="AT1G55910"/>
</dbReference>
<dbReference type="KEGG" id="ath:AT1G55910"/>
<dbReference type="Araport" id="AT1G55910"/>
<dbReference type="TAIR" id="AT1G55910">
    <property type="gene designation" value="ZIP11"/>
</dbReference>
<dbReference type="eggNOG" id="KOG1558">
    <property type="taxonomic scope" value="Eukaryota"/>
</dbReference>
<dbReference type="HOGENOM" id="CLU_046211_0_0_1"/>
<dbReference type="InParanoid" id="Q94EG9"/>
<dbReference type="OMA" id="HEMSHTH"/>
<dbReference type="PhylomeDB" id="Q94EG9"/>
<dbReference type="PRO" id="PR:Q94EG9"/>
<dbReference type="Proteomes" id="UP000006548">
    <property type="component" value="Chromosome 1"/>
</dbReference>
<dbReference type="ExpressionAtlas" id="Q94EG9">
    <property type="expression patterns" value="baseline and differential"/>
</dbReference>
<dbReference type="GO" id="GO:0005634">
    <property type="term" value="C:nucleus"/>
    <property type="evidence" value="ECO:0007005"/>
    <property type="project" value="TAIR"/>
</dbReference>
<dbReference type="GO" id="GO:0005886">
    <property type="term" value="C:plasma membrane"/>
    <property type="evidence" value="ECO:0007669"/>
    <property type="project" value="UniProtKB-SubCell"/>
</dbReference>
<dbReference type="GO" id="GO:0046873">
    <property type="term" value="F:metal ion transmembrane transporter activity"/>
    <property type="evidence" value="ECO:0007669"/>
    <property type="project" value="InterPro"/>
</dbReference>
<dbReference type="GO" id="GO:0006829">
    <property type="term" value="P:zinc ion transport"/>
    <property type="evidence" value="ECO:0007669"/>
    <property type="project" value="UniProtKB-KW"/>
</dbReference>
<dbReference type="InterPro" id="IPR003689">
    <property type="entry name" value="ZIP"/>
</dbReference>
<dbReference type="PANTHER" id="PTHR11040:SF217">
    <property type="entry name" value="ZINC TRANSPORTER 11"/>
    <property type="match status" value="1"/>
</dbReference>
<dbReference type="PANTHER" id="PTHR11040">
    <property type="entry name" value="ZINC/IRON TRANSPORTER"/>
    <property type="match status" value="1"/>
</dbReference>
<dbReference type="Pfam" id="PF02535">
    <property type="entry name" value="Zip"/>
    <property type="match status" value="1"/>
</dbReference>
<evidence type="ECO:0000250" key="1"/>
<evidence type="ECO:0000255" key="2"/>
<evidence type="ECO:0000305" key="3"/>
<sequence length="326" mass="35461">MSRSLVFFFLFLVLVVPCLSHGTGGDHDDDEASHVKSSDLKSKSLISVKIACLVIIFVLTFISGVSPYFLKWSQGFLVLGTQFAGGVFLATALMHFLSDADETFRGLLTAEGESEPSPAYPFAYMLACAGFMLTMLADSVIAHIYSKTQNDLELQGEDKSNQRSATTETSIGDSILLIVALCFHSVFEGIAIGISETKSDAWRALWTITLHKIFAAIAMGIALLRMIPDRPLFSSITYSFAFAISSPIGVAIGIVIDATTQGSIADWIFALSMSLACGVFVYVSVNHLLAKGYRPNKKVHVDEPRYKFLAVLFGVVVIAIVMIWDT</sequence>
<feature type="signal peptide" evidence="2">
    <location>
        <begin position="1"/>
        <end position="20"/>
    </location>
</feature>
<feature type="chain" id="PRO_0000041648" description="Zinc transporter 11">
    <location>
        <begin position="21"/>
        <end position="326"/>
    </location>
</feature>
<feature type="topological domain" description="Extracellular" evidence="2">
    <location>
        <begin position="21"/>
        <end position="49"/>
    </location>
</feature>
<feature type="transmembrane region" description="Helical" evidence="2">
    <location>
        <begin position="50"/>
        <end position="70"/>
    </location>
</feature>
<feature type="topological domain" description="Cytoplasmic" evidence="2">
    <location>
        <begin position="71"/>
        <end position="75"/>
    </location>
</feature>
<feature type="transmembrane region" description="Helical" evidence="2">
    <location>
        <begin position="76"/>
        <end position="96"/>
    </location>
</feature>
<feature type="topological domain" description="Extracellular" evidence="2">
    <location>
        <begin position="97"/>
        <end position="121"/>
    </location>
</feature>
<feature type="transmembrane region" description="Helical" evidence="2">
    <location>
        <begin position="122"/>
        <end position="142"/>
    </location>
</feature>
<feature type="topological domain" description="Cytoplasmic" evidence="2">
    <location>
        <begin position="143"/>
        <end position="174"/>
    </location>
</feature>
<feature type="transmembrane region" description="Helical" evidence="2">
    <location>
        <begin position="175"/>
        <end position="195"/>
    </location>
</feature>
<feature type="topological domain" description="Extracellular" evidence="2">
    <location>
        <begin position="196"/>
        <end position="203"/>
    </location>
</feature>
<feature type="transmembrane region" description="Helical" evidence="2">
    <location>
        <begin position="204"/>
        <end position="224"/>
    </location>
</feature>
<feature type="topological domain" description="Cytoplasmic" evidence="2">
    <location>
        <begin position="225"/>
        <end position="235"/>
    </location>
</feature>
<feature type="transmembrane region" description="Helical" evidence="2">
    <location>
        <begin position="236"/>
        <end position="256"/>
    </location>
</feature>
<feature type="topological domain" description="Extracellular" evidence="2">
    <location>
        <begin position="257"/>
        <end position="262"/>
    </location>
</feature>
<feature type="transmembrane region" description="Helical" evidence="2">
    <location>
        <begin position="263"/>
        <end position="283"/>
    </location>
</feature>
<feature type="topological domain" description="Cytoplasmic" evidence="2">
    <location>
        <begin position="284"/>
        <end position="305"/>
    </location>
</feature>
<feature type="transmembrane region" description="Helical" evidence="2">
    <location>
        <begin position="306"/>
        <end position="326"/>
    </location>
</feature>
<proteinExistence type="evidence at transcript level"/>